<keyword id="KW-0008">Acetylcholine receptor inhibiting toxin</keyword>
<keyword id="KW-0903">Direct protein sequencing</keyword>
<keyword id="KW-1015">Disulfide bond</keyword>
<keyword id="KW-0872">Ion channel impairing toxin</keyword>
<keyword id="KW-0528">Neurotoxin</keyword>
<keyword id="KW-0629">Postsynaptic neurotoxin</keyword>
<keyword id="KW-0964">Secreted</keyword>
<keyword id="KW-0800">Toxin</keyword>
<name>3S11_NAJAN</name>
<organism>
    <name type="scientific">Naja annulata annulata</name>
    <name type="common">Banded water cobra</name>
    <name type="synonym">Boulengerina annulata annulata</name>
    <dbReference type="NCBI Taxonomy" id="8610"/>
    <lineage>
        <taxon>Eukaryota</taxon>
        <taxon>Metazoa</taxon>
        <taxon>Chordata</taxon>
        <taxon>Craniata</taxon>
        <taxon>Vertebrata</taxon>
        <taxon>Euteleostomi</taxon>
        <taxon>Lepidosauria</taxon>
        <taxon>Squamata</taxon>
        <taxon>Bifurcata</taxon>
        <taxon>Unidentata</taxon>
        <taxon>Episquamata</taxon>
        <taxon>Toxicofera</taxon>
        <taxon>Serpentes</taxon>
        <taxon>Colubroidea</taxon>
        <taxon>Elapidae</taxon>
        <taxon>Elapinae</taxon>
        <taxon>Naja</taxon>
    </lineage>
</organism>
<proteinExistence type="evidence at protein level"/>
<dbReference type="PIR" id="A39327">
    <property type="entry name" value="A39327"/>
</dbReference>
<dbReference type="SMR" id="P34075"/>
<dbReference type="GO" id="GO:0005576">
    <property type="term" value="C:extracellular region"/>
    <property type="evidence" value="ECO:0007669"/>
    <property type="project" value="UniProtKB-SubCell"/>
</dbReference>
<dbReference type="GO" id="GO:0030550">
    <property type="term" value="F:acetylcholine receptor inhibitor activity"/>
    <property type="evidence" value="ECO:0007669"/>
    <property type="project" value="UniProtKB-KW"/>
</dbReference>
<dbReference type="GO" id="GO:0099106">
    <property type="term" value="F:ion channel regulator activity"/>
    <property type="evidence" value="ECO:0007669"/>
    <property type="project" value="UniProtKB-KW"/>
</dbReference>
<dbReference type="GO" id="GO:0090729">
    <property type="term" value="F:toxin activity"/>
    <property type="evidence" value="ECO:0007669"/>
    <property type="project" value="UniProtKB-KW"/>
</dbReference>
<dbReference type="CDD" id="cd00206">
    <property type="entry name" value="TFP_snake_toxin"/>
    <property type="match status" value="1"/>
</dbReference>
<dbReference type="FunFam" id="2.10.60.10:FF:000024">
    <property type="entry name" value="Cytotoxin 1"/>
    <property type="match status" value="1"/>
</dbReference>
<dbReference type="Gene3D" id="2.10.60.10">
    <property type="entry name" value="CD59"/>
    <property type="match status" value="1"/>
</dbReference>
<dbReference type="InterPro" id="IPR003571">
    <property type="entry name" value="Snake_3FTx"/>
</dbReference>
<dbReference type="InterPro" id="IPR045860">
    <property type="entry name" value="Snake_toxin-like_sf"/>
</dbReference>
<dbReference type="InterPro" id="IPR018354">
    <property type="entry name" value="Snake_toxin_con_site"/>
</dbReference>
<dbReference type="InterPro" id="IPR054131">
    <property type="entry name" value="Toxin_cobra-type"/>
</dbReference>
<dbReference type="Pfam" id="PF21947">
    <property type="entry name" value="Toxin_cobra-type"/>
    <property type="match status" value="1"/>
</dbReference>
<dbReference type="SUPFAM" id="SSF57302">
    <property type="entry name" value="Snake toxin-like"/>
    <property type="match status" value="1"/>
</dbReference>
<dbReference type="PROSITE" id="PS00272">
    <property type="entry name" value="SNAKE_TOXIN"/>
    <property type="match status" value="1"/>
</dbReference>
<comment type="function">
    <text evidence="2">Binds to muscle nicotinic acetylcholine receptor (nAChR) and inhibit acetylcholine from binding to the receptor, thereby impairing neuromuscular transmission.</text>
</comment>
<comment type="subcellular location">
    <subcellularLocation>
        <location evidence="3">Secreted</location>
    </subcellularLocation>
</comment>
<comment type="tissue specificity">
    <text evidence="4">Expressed by the venom gland.</text>
</comment>
<comment type="toxic dose">
    <text evidence="3">LD(50) is 0.052 mg/kg by intraperitoneal injection.</text>
</comment>
<comment type="similarity">
    <text evidence="4">Belongs to the three-finger toxin family. Short-chain subfamily. Type I alpha-neurotoxin sub-subfamily.</text>
</comment>
<reference key="1">
    <citation type="journal article" date="1991" name="Toxicon">
        <title>Lethal toxins and cross-neutralization of venoms from the African water cobras, Boulengerina annulata annulata and Boulengerina christyi.</title>
        <authorList>
            <person name="Weinstein S.A."/>
            <person name="Schmidt J.J."/>
            <person name="Smith L.A."/>
        </authorList>
    </citation>
    <scope>PROTEIN SEQUENCE</scope>
    <scope>TOXIC DOSE</scope>
    <scope>SUBCELLULAR LOCATION</scope>
    <source>
        <tissue>Venom</tissue>
    </source>
</reference>
<evidence type="ECO:0000250" key="1">
    <source>
        <dbReference type="UniProtKB" id="P0C1Z0"/>
    </source>
</evidence>
<evidence type="ECO:0000250" key="2">
    <source>
        <dbReference type="UniProtKB" id="P60775"/>
    </source>
</evidence>
<evidence type="ECO:0000269" key="3">
    <source>
    </source>
</evidence>
<evidence type="ECO:0000305" key="4"/>
<protein>
    <recommendedName>
        <fullName>Short neurotoxin 1</fullName>
    </recommendedName>
</protein>
<accession>P34075</accession>
<sequence length="61" mass="6837">KICYNQPSSQHPTTKACPGEKNCYRKQWSDHRGTIIERGCGCPTVKPGVKLHCCTTEKCNN</sequence>
<feature type="chain" id="PRO_0000093569" description="Short neurotoxin 1" evidence="3">
    <location>
        <begin position="1"/>
        <end position="61"/>
    </location>
</feature>
<feature type="disulfide bond" evidence="1">
    <location>
        <begin position="3"/>
        <end position="23"/>
    </location>
</feature>
<feature type="disulfide bond" evidence="1">
    <location>
        <begin position="17"/>
        <end position="40"/>
    </location>
</feature>
<feature type="disulfide bond" evidence="1">
    <location>
        <begin position="42"/>
        <end position="53"/>
    </location>
</feature>
<feature type="disulfide bond" evidence="1">
    <location>
        <begin position="54"/>
        <end position="59"/>
    </location>
</feature>